<sequence length="395" mass="45823">MWGLCKNHFPSNKIQVQERNKALKPKKSGSEHKTKQLFPVFNCKKKEKGVMIRFAILRNANTSLLSARSICLFTQAPTYCHVRLNTLNKSITTKRNSLTESKRHVHDGKHFFTTPHQQQQTKLGEIEEGHSPNIKGEDLRSIGQAITHQRNKRRKQIWSAIFGGIFGVILGYSLIYRVIYLKEQSFLPLFPSSKIRKLSTRDLKKVDVNQVQKLSKLRVLEILSGHDMIKEQYGVPLLDKDGNSPTLNEFSMWCEDQDPCVTGIVMEPDDKRDSSHTWYRIPFVCKWRITHRPISIRGTIDDLLNRIGLETADLFEIISPERVYGSFKYEYPLQGDSHALHLWFHGEIELDDDSLIVYNGKYHVDVKLQEIDLFRREKNGQLVQYVLYKNEAGDK</sequence>
<organism>
    <name type="scientific">Saccharomyces cerevisiae (strain Lalvin EC1118 / Prise de mousse)</name>
    <name type="common">Baker's yeast</name>
    <dbReference type="NCBI Taxonomy" id="643680"/>
    <lineage>
        <taxon>Eukaryota</taxon>
        <taxon>Fungi</taxon>
        <taxon>Dikarya</taxon>
        <taxon>Ascomycota</taxon>
        <taxon>Saccharomycotina</taxon>
        <taxon>Saccharomycetes</taxon>
        <taxon>Saccharomycetales</taxon>
        <taxon>Saccharomycetaceae</taxon>
        <taxon>Saccharomyces</taxon>
    </lineage>
</organism>
<reference key="1">
    <citation type="journal article" date="2009" name="Proc. Natl. Acad. Sci. U.S.A.">
        <title>Eukaryote-to-eukaryote gene transfer events revealed by the genome sequence of the wine yeast Saccharomyces cerevisiae EC1118.</title>
        <authorList>
            <person name="Novo M."/>
            <person name="Bigey F."/>
            <person name="Beyne E."/>
            <person name="Galeote V."/>
            <person name="Gavory F."/>
            <person name="Mallet S."/>
            <person name="Cambon B."/>
            <person name="Legras J.-L."/>
            <person name="Wincker P."/>
            <person name="Casaregola S."/>
            <person name="Dequin S."/>
        </authorList>
    </citation>
    <scope>NUCLEOTIDE SEQUENCE [LARGE SCALE GENOMIC DNA]</scope>
    <source>
        <strain>Lalvin EC1118 / Prise de mousse</strain>
    </source>
</reference>
<proteinExistence type="inferred from homology"/>
<gene>
    <name type="primary">AIM39</name>
    <name type="ORF">EC1118_1O4_1244g</name>
</gene>
<keyword id="KW-0472">Membrane</keyword>
<keyword id="KW-0496">Mitochondrion</keyword>
<keyword id="KW-0809">Transit peptide</keyword>
<keyword id="KW-0812">Transmembrane</keyword>
<keyword id="KW-1133">Transmembrane helix</keyword>
<protein>
    <recommendedName>
        <fullName>Altered inheritance of mitochondria protein 39, mitochondrial</fullName>
    </recommendedName>
</protein>
<name>AIM39_YEAS8</name>
<accession>C8ZHR0</accession>
<evidence type="ECO:0000255" key="1"/>
<evidence type="ECO:0000305" key="2"/>
<feature type="transit peptide" description="Mitochondrion" evidence="1">
    <location>
        <begin position="1"/>
        <end status="unknown"/>
    </location>
</feature>
<feature type="chain" id="PRO_0000399851" description="Altered inheritance of mitochondria protein 39, mitochondrial">
    <location>
        <begin status="unknown"/>
        <end position="395"/>
    </location>
</feature>
<feature type="transmembrane region" description="Helical" evidence="1">
    <location>
        <begin position="156"/>
        <end position="176"/>
    </location>
</feature>
<dbReference type="EMBL" id="FN394216">
    <property type="protein sequence ID" value="CAY86235.1"/>
    <property type="molecule type" value="Genomic_DNA"/>
</dbReference>
<dbReference type="SMR" id="C8ZHR0"/>
<dbReference type="HOGENOM" id="CLU_058942_0_0_1"/>
<dbReference type="OrthoDB" id="30198at4893"/>
<dbReference type="Proteomes" id="UP000000286">
    <property type="component" value="Chromosome XV, Scaffold EC1118_1O4"/>
</dbReference>
<dbReference type="GO" id="GO:0031966">
    <property type="term" value="C:mitochondrial membrane"/>
    <property type="evidence" value="ECO:0007669"/>
    <property type="project" value="UniProtKB-SubCell"/>
</dbReference>
<comment type="subcellular location">
    <subcellularLocation>
        <location evidence="2">Mitochondrion membrane</location>
        <topology evidence="2">Single-pass membrane protein</topology>
    </subcellularLocation>
</comment>
<comment type="similarity">
    <text evidence="2">Belongs to the AIM39 family.</text>
</comment>